<dbReference type="EMBL" id="CP001138">
    <property type="protein sequence ID" value="ACH52086.1"/>
    <property type="molecule type" value="Genomic_DNA"/>
</dbReference>
<dbReference type="RefSeq" id="WP_000450405.1">
    <property type="nucleotide sequence ID" value="NC_011149.1"/>
</dbReference>
<dbReference type="SMR" id="B5EX25"/>
<dbReference type="KEGG" id="sea:SeAg_B2182"/>
<dbReference type="HOGENOM" id="CLU_153146_0_0_6"/>
<dbReference type="Proteomes" id="UP000008819">
    <property type="component" value="Chromosome"/>
</dbReference>
<dbReference type="GO" id="GO:0005829">
    <property type="term" value="C:cytosol"/>
    <property type="evidence" value="ECO:0007669"/>
    <property type="project" value="TreeGrafter"/>
</dbReference>
<dbReference type="HAMAP" id="MF_00683">
    <property type="entry name" value="Pole_loc_TmaR"/>
    <property type="match status" value="1"/>
</dbReference>
<dbReference type="InterPro" id="IPR007458">
    <property type="entry name" value="DUF496"/>
</dbReference>
<dbReference type="InterPro" id="IPR053375">
    <property type="entry name" value="UPF0265"/>
</dbReference>
<dbReference type="NCBIfam" id="NF003844">
    <property type="entry name" value="PRK05423.1"/>
    <property type="match status" value="1"/>
</dbReference>
<dbReference type="NCBIfam" id="NF040881">
    <property type="entry name" value="PTS_reg_TmaR"/>
    <property type="match status" value="1"/>
</dbReference>
<dbReference type="PANTHER" id="PTHR39591">
    <property type="entry name" value="UPF0265 PROTEIN YEEX"/>
    <property type="match status" value="1"/>
</dbReference>
<dbReference type="PANTHER" id="PTHR39591:SF1">
    <property type="entry name" value="UPF0265 PROTEIN YEEX"/>
    <property type="match status" value="1"/>
</dbReference>
<dbReference type="Pfam" id="PF04363">
    <property type="entry name" value="DUF496"/>
    <property type="match status" value="1"/>
</dbReference>
<dbReference type="PIRSF" id="PIRSF028773">
    <property type="entry name" value="UCP028773"/>
    <property type="match status" value="1"/>
</dbReference>
<keyword id="KW-0175">Coiled coil</keyword>
<keyword id="KW-0963">Cytoplasm</keyword>
<evidence type="ECO:0000255" key="1">
    <source>
        <dbReference type="HAMAP-Rule" id="MF_00683"/>
    </source>
</evidence>
<feature type="chain" id="PRO_1000131771" description="Pole-localizer protein TmaR">
    <location>
        <begin position="1"/>
        <end position="111"/>
    </location>
</feature>
<feature type="coiled-coil region" evidence="1">
    <location>
        <begin position="14"/>
        <end position="41"/>
    </location>
</feature>
<name>TMAR_SALA4</name>
<sequence>METTKPSFQDVLEFVRLFRRKNKLQREIQDIEKKIRDNQKRVLLLDNLSDYIKPGMSVEAIQGIIASMKSDYEDRVDDYIIKNAEISKERRDISKKLKAMGEMKHADVKAE</sequence>
<organism>
    <name type="scientific">Salmonella agona (strain SL483)</name>
    <dbReference type="NCBI Taxonomy" id="454166"/>
    <lineage>
        <taxon>Bacteria</taxon>
        <taxon>Pseudomonadati</taxon>
        <taxon>Pseudomonadota</taxon>
        <taxon>Gammaproteobacteria</taxon>
        <taxon>Enterobacterales</taxon>
        <taxon>Enterobacteriaceae</taxon>
        <taxon>Salmonella</taxon>
    </lineage>
</organism>
<gene>
    <name evidence="1" type="primary">tmaR</name>
    <name type="ordered locus">SeAg_B2182</name>
</gene>
<protein>
    <recommendedName>
        <fullName evidence="1">Pole-localizer protein TmaR</fullName>
    </recommendedName>
</protein>
<accession>B5EX25</accession>
<comment type="function">
    <text evidence="1">Pole-localizer protein involved in the regulation of several cellular processes.</text>
</comment>
<comment type="subcellular location">
    <subcellularLocation>
        <location evidence="1">Cytoplasm</location>
    </subcellularLocation>
    <text evidence="1">Forms clusters that localize mainly near one pole of the cell.</text>
</comment>
<comment type="similarity">
    <text evidence="1">Belongs to the pole-localizer TmaR family.</text>
</comment>
<proteinExistence type="inferred from homology"/>
<reference key="1">
    <citation type="journal article" date="2011" name="J. Bacteriol.">
        <title>Comparative genomics of 28 Salmonella enterica isolates: evidence for CRISPR-mediated adaptive sublineage evolution.</title>
        <authorList>
            <person name="Fricke W.F."/>
            <person name="Mammel M.K."/>
            <person name="McDermott P.F."/>
            <person name="Tartera C."/>
            <person name="White D.G."/>
            <person name="Leclerc J.E."/>
            <person name="Ravel J."/>
            <person name="Cebula T.A."/>
        </authorList>
    </citation>
    <scope>NUCLEOTIDE SEQUENCE [LARGE SCALE GENOMIC DNA]</scope>
    <source>
        <strain>SL483</strain>
    </source>
</reference>